<comment type="similarity">
    <text evidence="1">Belongs to the bacilliredoxin family.</text>
</comment>
<feature type="chain" id="PRO_0000271989" description="Bacilliredoxin CHU_0972">
    <location>
        <begin position="1"/>
        <end position="135"/>
    </location>
</feature>
<evidence type="ECO:0000305" key="1"/>
<dbReference type="EMBL" id="CP000383">
    <property type="protein sequence ID" value="ABG58249.1"/>
    <property type="molecule type" value="Genomic_DNA"/>
</dbReference>
<dbReference type="RefSeq" id="WP_011584364.1">
    <property type="nucleotide sequence ID" value="NC_008255.1"/>
</dbReference>
<dbReference type="SMR" id="Q11WG7"/>
<dbReference type="STRING" id="269798.CHU_0972"/>
<dbReference type="KEGG" id="chu:CHU_0972"/>
<dbReference type="eggNOG" id="ENOG502ZBVN">
    <property type="taxonomic scope" value="Bacteria"/>
</dbReference>
<dbReference type="HOGENOM" id="CLU_132521_0_0_10"/>
<dbReference type="OrthoDB" id="9793981at2"/>
<dbReference type="Proteomes" id="UP000001822">
    <property type="component" value="Chromosome"/>
</dbReference>
<dbReference type="GO" id="GO:0045454">
    <property type="term" value="P:cell redox homeostasis"/>
    <property type="evidence" value="ECO:0000250"/>
    <property type="project" value="UniProtKB"/>
</dbReference>
<dbReference type="Gene3D" id="3.40.30.10">
    <property type="entry name" value="Glutaredoxin"/>
    <property type="match status" value="1"/>
</dbReference>
<dbReference type="InterPro" id="IPR009474">
    <property type="entry name" value="BrxB/BrxA"/>
</dbReference>
<dbReference type="NCBIfam" id="TIGR04191">
    <property type="entry name" value="YphP_YqiW"/>
    <property type="match status" value="1"/>
</dbReference>
<dbReference type="PANTHER" id="PTHR40052:SF2">
    <property type="entry name" value="BACILLIREDOXIN BRXA"/>
    <property type="match status" value="1"/>
</dbReference>
<dbReference type="PANTHER" id="PTHR40052">
    <property type="entry name" value="UPF0403 PROTEIN YQIW-RELATED"/>
    <property type="match status" value="1"/>
</dbReference>
<dbReference type="Pfam" id="PF06491">
    <property type="entry name" value="Disulph_isomer"/>
    <property type="match status" value="1"/>
</dbReference>
<proteinExistence type="inferred from homology"/>
<name>Y972_CYTH3</name>
<keyword id="KW-1185">Reference proteome</keyword>
<organism>
    <name type="scientific">Cytophaga hutchinsonii (strain ATCC 33406 / DSM 1761 / CIP 103989 / NBRC 15051 / NCIMB 9469 / D465)</name>
    <dbReference type="NCBI Taxonomy" id="269798"/>
    <lineage>
        <taxon>Bacteria</taxon>
        <taxon>Pseudomonadati</taxon>
        <taxon>Bacteroidota</taxon>
        <taxon>Cytophagia</taxon>
        <taxon>Cytophagales</taxon>
        <taxon>Cytophagaceae</taxon>
        <taxon>Cytophaga</taxon>
    </lineage>
</organism>
<gene>
    <name type="ordered locus">CHU_0972</name>
</gene>
<sequence length="135" mass="14621">MYPEQLVAPMKAELANAGFTELTTPEAVEAFMKKPGTSMIVINSVCGCAAGTARPGVRKSLEHSKLPAHLGTVFAGVDKEAVNKAREYTLPYPPSSPAIAVFKDGNLVHFVERHHIEGRSADMIATHLKMVYDEL</sequence>
<accession>Q11WG7</accession>
<protein>
    <recommendedName>
        <fullName evidence="1">Bacilliredoxin CHU_0972</fullName>
    </recommendedName>
</protein>
<reference key="1">
    <citation type="journal article" date="2007" name="Appl. Environ. Microbiol.">
        <title>Genome sequence of the cellulolytic gliding bacterium Cytophaga hutchinsonii.</title>
        <authorList>
            <person name="Xie G."/>
            <person name="Bruce D.C."/>
            <person name="Challacombe J.F."/>
            <person name="Chertkov O."/>
            <person name="Detter J.C."/>
            <person name="Gilna P."/>
            <person name="Han C.S."/>
            <person name="Lucas S."/>
            <person name="Misra M."/>
            <person name="Myers G.L."/>
            <person name="Richardson P."/>
            <person name="Tapia R."/>
            <person name="Thayer N."/>
            <person name="Thompson L.S."/>
            <person name="Brettin T.S."/>
            <person name="Henrissat B."/>
            <person name="Wilson D.B."/>
            <person name="McBride M.J."/>
        </authorList>
    </citation>
    <scope>NUCLEOTIDE SEQUENCE [LARGE SCALE GENOMIC DNA]</scope>
    <source>
        <strain>ATCC 33406 / DSM 1761 / JCM 20678 / CIP 103989 / IAM 12607 / NBRC 15051 / NCIMB 9469 / D465</strain>
    </source>
</reference>